<feature type="signal peptide" evidence="1">
    <location>
        <begin position="1"/>
        <end position="24"/>
    </location>
</feature>
<feature type="propeptide" id="PRO_0000033109" evidence="1">
    <location>
        <begin position="25"/>
        <end position="99"/>
    </location>
</feature>
<feature type="peptide" id="PRO_0000033110" description="Somatostatin-14">
    <location>
        <begin position="102"/>
        <end position="115"/>
    </location>
</feature>
<feature type="region of interest" description="Disordered" evidence="2">
    <location>
        <begin position="60"/>
        <end position="79"/>
    </location>
</feature>
<feature type="disulfide bond" evidence="1">
    <location>
        <begin position="104"/>
        <end position="115"/>
    </location>
</feature>
<reference key="1">
    <citation type="journal article" date="1996" name="Proc. Natl. Acad. Sci. U.S.A.">
        <title>Occurrence of two somatostatin variants in the frog brain: characterization of the cDNAs, distribution of the mRNAs, and receptor-binding affinities of the peptides.</title>
        <authorList>
            <person name="Tostivint H."/>
            <person name="Lihrmann I."/>
            <person name="Bucharles C."/>
            <person name="Vieau D."/>
            <person name="Coulouarn Y."/>
            <person name="Fournier A."/>
            <person name="Conlon J.M."/>
            <person name="Vaudry H."/>
        </authorList>
    </citation>
    <scope>NUCLEOTIDE SEQUENCE [MRNA]</scope>
    <source>
        <tissue>Brain</tissue>
    </source>
</reference>
<reference key="2">
    <citation type="journal article" date="1992" name="Biochem. Biophys. Res. Commun.">
        <title>Isolation of [Pro2,Met13]somatostatin-14 and somatostatin-14 from the frog brain reveals the existence of a somatostatin gene family in a tetrapod.</title>
        <authorList>
            <person name="Vaudry H."/>
            <person name="Chartrel N."/>
            <person name="Conlon J.M."/>
        </authorList>
    </citation>
    <scope>PROTEIN SEQUENCE OF 102-115</scope>
    <source>
        <tissue>Brain</tissue>
    </source>
</reference>
<protein>
    <recommendedName>
        <fullName>Somatostatin-1</fullName>
    </recommendedName>
    <alternativeName>
        <fullName>PSS1</fullName>
    </alternativeName>
    <component>
        <recommendedName>
            <fullName>Somatostatin-14</fullName>
        </recommendedName>
        <alternativeName>
            <fullName>SSS1</fullName>
        </alternativeName>
        <alternativeName>
            <fullName>Somatostatin-1</fullName>
            <shortName>S-I</shortName>
        </alternativeName>
    </component>
</protein>
<name>SMS1_PELRI</name>
<dbReference type="EMBL" id="U68136">
    <property type="protein sequence ID" value="AAC60093.1"/>
    <property type="molecule type" value="mRNA"/>
</dbReference>
<dbReference type="PIR" id="JC6166">
    <property type="entry name" value="JC6166"/>
</dbReference>
<dbReference type="GO" id="GO:0005615">
    <property type="term" value="C:extracellular space"/>
    <property type="evidence" value="ECO:0007669"/>
    <property type="project" value="TreeGrafter"/>
</dbReference>
<dbReference type="GO" id="GO:0005179">
    <property type="term" value="F:hormone activity"/>
    <property type="evidence" value="ECO:0007669"/>
    <property type="project" value="UniProtKB-KW"/>
</dbReference>
<dbReference type="GO" id="GO:0030334">
    <property type="term" value="P:regulation of cell migration"/>
    <property type="evidence" value="ECO:0007669"/>
    <property type="project" value="TreeGrafter"/>
</dbReference>
<dbReference type="InterPro" id="IPR004250">
    <property type="entry name" value="Somatostatin"/>
</dbReference>
<dbReference type="InterPro" id="IPR018142">
    <property type="entry name" value="Somatostatin/Cortistatin_C"/>
</dbReference>
<dbReference type="PANTHER" id="PTHR10558">
    <property type="entry name" value="SOMATOSTATIN"/>
    <property type="match status" value="1"/>
</dbReference>
<dbReference type="PANTHER" id="PTHR10558:SF2">
    <property type="entry name" value="SOMATOSTATIN"/>
    <property type="match status" value="1"/>
</dbReference>
<dbReference type="Pfam" id="PF03002">
    <property type="entry name" value="Somatostatin"/>
    <property type="match status" value="1"/>
</dbReference>
<dbReference type="PIRSF" id="PIRSF001814">
    <property type="entry name" value="Somatostatin"/>
    <property type="match status" value="1"/>
</dbReference>
<organism>
    <name type="scientific">Pelophylax ridibundus</name>
    <name type="common">Marsh frog</name>
    <name type="synonym">Rana ridibunda</name>
    <dbReference type="NCBI Taxonomy" id="8406"/>
    <lineage>
        <taxon>Eukaryota</taxon>
        <taxon>Metazoa</taxon>
        <taxon>Chordata</taxon>
        <taxon>Craniata</taxon>
        <taxon>Vertebrata</taxon>
        <taxon>Euteleostomi</taxon>
        <taxon>Amphibia</taxon>
        <taxon>Batrachia</taxon>
        <taxon>Anura</taxon>
        <taxon>Neobatrachia</taxon>
        <taxon>Ranoidea</taxon>
        <taxon>Ranidae</taxon>
        <taxon>Pelophylax</taxon>
    </lineage>
</organism>
<comment type="function">
    <text>Somatostatin inhibits the release of somatotropin.</text>
</comment>
<comment type="subcellular location">
    <subcellularLocation>
        <location>Secreted</location>
    </subcellularLocation>
</comment>
<comment type="similarity">
    <text evidence="3">Belongs to the somatostatin family.</text>
</comment>
<proteinExistence type="evidence at protein level"/>
<accession>P87384</accession>
<accession>Q9PSI8</accession>
<keyword id="KW-0165">Cleavage on pair of basic residues</keyword>
<keyword id="KW-0903">Direct protein sequencing</keyword>
<keyword id="KW-1015">Disulfide bond</keyword>
<keyword id="KW-0372">Hormone</keyword>
<keyword id="KW-0964">Secreted</keyword>
<keyword id="KW-0732">Signal</keyword>
<evidence type="ECO:0000250" key="1"/>
<evidence type="ECO:0000256" key="2">
    <source>
        <dbReference type="SAM" id="MobiDB-lite"/>
    </source>
</evidence>
<evidence type="ECO:0000305" key="3"/>
<sequence>MQSCRVQCALTLLSLALAINSISAAPTDPRLRQFLQKSLASAGKQELAKYFLAELLSEPSQTDNEALESDDLPRGAEQDEVRLELERSANSSPALAPRERKAGCKNFFWKTFTSC</sequence>
<gene>
    <name type="primary">sst1</name>
</gene>